<accession>Q6XVN8</accession>
<protein>
    <recommendedName>
        <fullName>Microtubule-associated protein 1 light chain 3 alpha</fullName>
    </recommendedName>
    <alternativeName>
        <fullName>Autophagy-related protein LC3 A</fullName>
    </alternativeName>
    <alternativeName>
        <fullName>Autophagy-related ubiquitin-like modifier LC3 A</fullName>
    </alternativeName>
    <alternativeName>
        <fullName>MAP1 light chain 3-like protein 1</fullName>
    </alternativeName>
    <alternativeName>
        <fullName evidence="7">Microtubule-associated proteins 1A/1B light chain 3A</fullName>
        <shortName>MAP1A/MAP1B LC3 A</shortName>
        <shortName>MAP1A/MAP1B light chain 3 A</shortName>
    </alternativeName>
</protein>
<organism>
    <name type="scientific">Rattus norvegicus</name>
    <name type="common">Rat</name>
    <dbReference type="NCBI Taxonomy" id="10116"/>
    <lineage>
        <taxon>Eukaryota</taxon>
        <taxon>Metazoa</taxon>
        <taxon>Chordata</taxon>
        <taxon>Craniata</taxon>
        <taxon>Vertebrata</taxon>
        <taxon>Euteleostomi</taxon>
        <taxon>Mammalia</taxon>
        <taxon>Eutheria</taxon>
        <taxon>Euarchontoglires</taxon>
        <taxon>Glires</taxon>
        <taxon>Rodentia</taxon>
        <taxon>Myomorpha</taxon>
        <taxon>Muroidea</taxon>
        <taxon>Muridae</taxon>
        <taxon>Murinae</taxon>
        <taxon>Rattus</taxon>
    </lineage>
</organism>
<dbReference type="EMBL" id="AY206668">
    <property type="protein sequence ID" value="AAP42560.1"/>
    <property type="molecule type" value="mRNA"/>
</dbReference>
<dbReference type="EMBL" id="BC086389">
    <property type="protein sequence ID" value="AAH86389.1"/>
    <property type="molecule type" value="mRNA"/>
</dbReference>
<dbReference type="RefSeq" id="NP_955794.1">
    <property type="nucleotide sequence ID" value="NM_199500.2"/>
</dbReference>
<dbReference type="SMR" id="Q6XVN8"/>
<dbReference type="BioGRID" id="263296">
    <property type="interactions" value="1"/>
</dbReference>
<dbReference type="FunCoup" id="Q6XVN8">
    <property type="interactions" value="604"/>
</dbReference>
<dbReference type="IntAct" id="Q6XVN8">
    <property type="interactions" value="5"/>
</dbReference>
<dbReference type="MINT" id="Q6XVN8"/>
<dbReference type="STRING" id="10116.ENSRNOP00000032429"/>
<dbReference type="iPTMnet" id="Q6XVN8"/>
<dbReference type="PhosphoSitePlus" id="Q6XVN8"/>
<dbReference type="SwissPalm" id="Q6XVN8"/>
<dbReference type="jPOST" id="Q6XVN8"/>
<dbReference type="PaxDb" id="10116-ENSRNOP00000032429"/>
<dbReference type="Ensembl" id="ENSRNOT00000035060.5">
    <property type="protein sequence ID" value="ENSRNOP00000032429.3"/>
    <property type="gene ID" value="ENSRNOG00000025443.5"/>
</dbReference>
<dbReference type="GeneID" id="362245"/>
<dbReference type="KEGG" id="rno:362245"/>
<dbReference type="UCSC" id="RGD:735183">
    <property type="organism name" value="rat"/>
</dbReference>
<dbReference type="AGR" id="RGD:735183"/>
<dbReference type="CTD" id="84557"/>
<dbReference type="RGD" id="735183">
    <property type="gene designation" value="Map1lc3a"/>
</dbReference>
<dbReference type="eggNOG" id="KOG1654">
    <property type="taxonomic scope" value="Eukaryota"/>
</dbReference>
<dbReference type="GeneTree" id="ENSGT00940000158853"/>
<dbReference type="HOGENOM" id="CLU_119276_1_0_1"/>
<dbReference type="InParanoid" id="Q6XVN8"/>
<dbReference type="OMA" id="VNERSMV"/>
<dbReference type="OrthoDB" id="6738456at2759"/>
<dbReference type="PhylomeDB" id="Q6XVN8"/>
<dbReference type="TreeFam" id="TF312964"/>
<dbReference type="Reactome" id="R-RNO-1632852">
    <property type="pathway name" value="Macroautophagy"/>
</dbReference>
<dbReference type="Reactome" id="R-RNO-5205685">
    <property type="pathway name" value="PINK1-PRKN Mediated Mitophagy"/>
</dbReference>
<dbReference type="Reactome" id="R-RNO-8934903">
    <property type="pathway name" value="Receptor Mediated Mitophagy"/>
</dbReference>
<dbReference type="PRO" id="PR:Q6XVN8"/>
<dbReference type="Proteomes" id="UP000002494">
    <property type="component" value="Chromosome 3"/>
</dbReference>
<dbReference type="Bgee" id="ENSRNOG00000025443">
    <property type="expression patterns" value="Expressed in heart and 19 other cell types or tissues"/>
</dbReference>
<dbReference type="GO" id="GO:0044754">
    <property type="term" value="C:autolysosome"/>
    <property type="evidence" value="ECO:0000266"/>
    <property type="project" value="RGD"/>
</dbReference>
<dbReference type="GO" id="GO:0005776">
    <property type="term" value="C:autophagosome"/>
    <property type="evidence" value="ECO:0000314"/>
    <property type="project" value="UniProtKB"/>
</dbReference>
<dbReference type="GO" id="GO:0000421">
    <property type="term" value="C:autophagosome membrane"/>
    <property type="evidence" value="ECO:0000314"/>
    <property type="project" value="RGD"/>
</dbReference>
<dbReference type="GO" id="GO:0005737">
    <property type="term" value="C:cytoplasm"/>
    <property type="evidence" value="ECO:0000314"/>
    <property type="project" value="UniProtKB"/>
</dbReference>
<dbReference type="GO" id="GO:0005829">
    <property type="term" value="C:cytosol"/>
    <property type="evidence" value="ECO:0000266"/>
    <property type="project" value="RGD"/>
</dbReference>
<dbReference type="GO" id="GO:0098978">
    <property type="term" value="C:glutamatergic synapse"/>
    <property type="evidence" value="ECO:0000314"/>
    <property type="project" value="SynGO"/>
</dbReference>
<dbReference type="GO" id="GO:0005770">
    <property type="term" value="C:late endosome"/>
    <property type="evidence" value="ECO:0000314"/>
    <property type="project" value="RGD"/>
</dbReference>
<dbReference type="GO" id="GO:0005874">
    <property type="term" value="C:microtubule"/>
    <property type="evidence" value="ECO:0007669"/>
    <property type="project" value="UniProtKB-KW"/>
</dbReference>
<dbReference type="GO" id="GO:0031090">
    <property type="term" value="C:organelle membrane"/>
    <property type="evidence" value="ECO:0000314"/>
    <property type="project" value="UniProtKB"/>
</dbReference>
<dbReference type="GO" id="GO:0045202">
    <property type="term" value="C:synapse"/>
    <property type="evidence" value="ECO:0000314"/>
    <property type="project" value="SynGO"/>
</dbReference>
<dbReference type="GO" id="GO:0008017">
    <property type="term" value="F:microtubule binding"/>
    <property type="evidence" value="ECO:0000318"/>
    <property type="project" value="GO_Central"/>
</dbReference>
<dbReference type="GO" id="GO:0008429">
    <property type="term" value="F:phosphatidylethanolamine binding"/>
    <property type="evidence" value="ECO:0000318"/>
    <property type="project" value="GO_Central"/>
</dbReference>
<dbReference type="GO" id="GO:0005543">
    <property type="term" value="F:phospholipid binding"/>
    <property type="evidence" value="ECO:0000266"/>
    <property type="project" value="RGD"/>
</dbReference>
<dbReference type="GO" id="GO:0031625">
    <property type="term" value="F:ubiquitin protein ligase binding"/>
    <property type="evidence" value="ECO:0000266"/>
    <property type="project" value="RGD"/>
</dbReference>
<dbReference type="GO" id="GO:0000045">
    <property type="term" value="P:autophagosome assembly"/>
    <property type="evidence" value="ECO:0000314"/>
    <property type="project" value="UniProtKB"/>
</dbReference>
<dbReference type="GO" id="GO:0097352">
    <property type="term" value="P:autophagosome maturation"/>
    <property type="evidence" value="ECO:0000266"/>
    <property type="project" value="RGD"/>
</dbReference>
<dbReference type="GO" id="GO:0006914">
    <property type="term" value="P:autophagy"/>
    <property type="evidence" value="ECO:0000314"/>
    <property type="project" value="RGD"/>
</dbReference>
<dbReference type="GO" id="GO:0000422">
    <property type="term" value="P:autophagy of mitochondrion"/>
    <property type="evidence" value="ECO:0000266"/>
    <property type="project" value="RGD"/>
</dbReference>
<dbReference type="GO" id="GO:0034198">
    <property type="term" value="P:cellular response to amino acid starvation"/>
    <property type="evidence" value="ECO:0000270"/>
    <property type="project" value="RGD"/>
</dbReference>
<dbReference type="GO" id="GO:0071280">
    <property type="term" value="P:cellular response to copper ion"/>
    <property type="evidence" value="ECO:0000270"/>
    <property type="project" value="RGD"/>
</dbReference>
<dbReference type="GO" id="GO:0070301">
    <property type="term" value="P:cellular response to hydrogen peroxide"/>
    <property type="evidence" value="ECO:0000270"/>
    <property type="project" value="RGD"/>
</dbReference>
<dbReference type="GO" id="GO:0006995">
    <property type="term" value="P:cellular response to nitrogen starvation"/>
    <property type="evidence" value="ECO:0000318"/>
    <property type="project" value="GO_Central"/>
</dbReference>
<dbReference type="GO" id="GO:0090650">
    <property type="term" value="P:cellular response to oxygen-glucose deprivation"/>
    <property type="evidence" value="ECO:0000270"/>
    <property type="project" value="RGD"/>
</dbReference>
<dbReference type="GO" id="GO:0009267">
    <property type="term" value="P:cellular response to starvation"/>
    <property type="evidence" value="ECO:0000266"/>
    <property type="project" value="RGD"/>
</dbReference>
<dbReference type="GO" id="GO:0007254">
    <property type="term" value="P:JNK cascade"/>
    <property type="evidence" value="ECO:0000315"/>
    <property type="project" value="RGD"/>
</dbReference>
<dbReference type="GO" id="GO:0016236">
    <property type="term" value="P:macroautophagy"/>
    <property type="evidence" value="ECO:0000266"/>
    <property type="project" value="RGD"/>
</dbReference>
<dbReference type="GO" id="GO:0000423">
    <property type="term" value="P:mitophagy"/>
    <property type="evidence" value="ECO:0000318"/>
    <property type="project" value="GO_Central"/>
</dbReference>
<dbReference type="GO" id="GO:0038066">
    <property type="term" value="P:p38MAPK cascade"/>
    <property type="evidence" value="ECO:0000315"/>
    <property type="project" value="RGD"/>
</dbReference>
<dbReference type="GO" id="GO:0010040">
    <property type="term" value="P:response to iron(II) ion"/>
    <property type="evidence" value="ECO:0000270"/>
    <property type="project" value="RGD"/>
</dbReference>
<dbReference type="GO" id="GO:0010288">
    <property type="term" value="P:response to lead ion"/>
    <property type="evidence" value="ECO:0000270"/>
    <property type="project" value="RGD"/>
</dbReference>
<dbReference type="GO" id="GO:0031667">
    <property type="term" value="P:response to nutrient levels"/>
    <property type="evidence" value="ECO:0000270"/>
    <property type="project" value="RGD"/>
</dbReference>
<dbReference type="GO" id="GO:0060395">
    <property type="term" value="P:SMAD protein signal transduction"/>
    <property type="evidence" value="ECO:0000314"/>
    <property type="project" value="RGD"/>
</dbReference>
<dbReference type="CDD" id="cd17234">
    <property type="entry name" value="Ubl_ATG8_MAP1LC3A"/>
    <property type="match status" value="1"/>
</dbReference>
<dbReference type="FunFam" id="3.10.20.90:FF:000059">
    <property type="entry name" value="Microtubule-associated proteins 1A/1B light chain 3B"/>
    <property type="match status" value="1"/>
</dbReference>
<dbReference type="Gene3D" id="3.10.20.90">
    <property type="entry name" value="Phosphatidylinositol 3-kinase Catalytic Subunit, Chain A, domain 1"/>
    <property type="match status" value="1"/>
</dbReference>
<dbReference type="InterPro" id="IPR004241">
    <property type="entry name" value="Atg8-like"/>
</dbReference>
<dbReference type="InterPro" id="IPR029071">
    <property type="entry name" value="Ubiquitin-like_domsf"/>
</dbReference>
<dbReference type="PANTHER" id="PTHR10969">
    <property type="entry name" value="MICROTUBULE-ASSOCIATED PROTEINS 1A/1B LIGHT CHAIN 3-RELATED"/>
    <property type="match status" value="1"/>
</dbReference>
<dbReference type="Pfam" id="PF02991">
    <property type="entry name" value="ATG8"/>
    <property type="match status" value="1"/>
</dbReference>
<dbReference type="SUPFAM" id="SSF54236">
    <property type="entry name" value="Ubiquitin-like"/>
    <property type="match status" value="1"/>
</dbReference>
<reference key="1">
    <citation type="submission" date="2002-12" db="EMBL/GenBank/DDBJ databases">
        <title>Cloning and characterization of rat lc3 orthologs.</title>
        <authorList>
            <person name="Dang Y."/>
            <person name="Yu L."/>
            <person name="Wu J."/>
            <person name="Pei Y."/>
        </authorList>
    </citation>
    <scope>NUCLEOTIDE SEQUENCE [MRNA]</scope>
    <source>
        <tissue>Brain</tissue>
    </source>
</reference>
<reference key="2">
    <citation type="journal article" date="2004" name="Genome Res.">
        <title>The status, quality, and expansion of the NIH full-length cDNA project: the Mammalian Gene Collection (MGC).</title>
        <authorList>
            <consortium name="The MGC Project Team"/>
        </authorList>
    </citation>
    <scope>NUCLEOTIDE SEQUENCE [LARGE SCALE MRNA]</scope>
    <source>
        <tissue>Ovary</tissue>
    </source>
</reference>
<reference key="3">
    <citation type="submission" date="2007-07" db="UniProtKB">
        <authorList>
            <person name="Lubec G."/>
            <person name="Kang S.U."/>
        </authorList>
    </citation>
    <scope>PROTEIN SEQUENCE OF 31-37</scope>
    <scope>IDENTIFICATION BY MASS SPECTROMETRY</scope>
    <source>
        <strain>Sprague-Dawley</strain>
        <tissue>Brain</tissue>
    </source>
</reference>
<reference key="4">
    <citation type="journal article" date="2006" name="Autophagy">
        <title>Effects of RNA interference of Atg4B on the limited proteolysis of LC3 in PC12 cells and expression of Atg4B in various rat tissues.</title>
        <authorList>
            <person name="Yoshimura K."/>
            <person name="Shibata M."/>
            <person name="Koike M."/>
            <person name="Gotoh K."/>
            <person name="Fukaya M."/>
            <person name="Watanabe M."/>
            <person name="Uchiyama Y."/>
        </authorList>
    </citation>
    <scope>CLEAVAGE BY ATG4B</scope>
</reference>
<reference key="5">
    <citation type="journal article" date="2012" name="Cell Death Differ.">
        <title>TP53INP1, a tumor suppressor, interacts with LC3 and ATG8-family proteins through the LC3-interacting region (LIR) and promotes autophagy-dependent cell death.</title>
        <authorList>
            <person name="Seillier M."/>
            <person name="Peuget S."/>
            <person name="Gayet O."/>
            <person name="Gauthier C."/>
            <person name="N'guessan P."/>
            <person name="Monte M."/>
            <person name="Carrier A."/>
            <person name="Iovanna J.L."/>
            <person name="Dusetti N.J."/>
        </authorList>
    </citation>
    <scope>INTERACTION WITH TP53INP1 AND SQSTM1</scope>
</reference>
<reference key="6">
    <citation type="journal article" date="2018" name="J. Neurosci.">
        <title>Neuronal Preconditioning Requires the Mitophagic Activity of C-terminus of HSC70-Interacting Protein.</title>
        <authorList>
            <person name="Lizama B.N."/>
            <person name="Palubinsky A.M."/>
            <person name="Raveendran V.A."/>
            <person name="Moore A.M."/>
            <person name="Federspiel J.D."/>
            <person name="Codreanu S.G."/>
            <person name="Liebler D.C."/>
            <person name="McLaughlin B."/>
        </authorList>
    </citation>
    <scope>DEVELOPMENTAL STAGE</scope>
</reference>
<evidence type="ECO:0000250" key="1">
    <source>
        <dbReference type="UniProtKB" id="Q62625"/>
    </source>
</evidence>
<evidence type="ECO:0000250" key="2">
    <source>
        <dbReference type="UniProtKB" id="Q91VR7"/>
    </source>
</evidence>
<evidence type="ECO:0000250" key="3">
    <source>
        <dbReference type="UniProtKB" id="Q9H492"/>
    </source>
</evidence>
<evidence type="ECO:0000269" key="4">
    <source>
    </source>
</evidence>
<evidence type="ECO:0000269" key="5">
    <source>
    </source>
</evidence>
<evidence type="ECO:0000269" key="6">
    <source>
    </source>
</evidence>
<evidence type="ECO:0000305" key="7"/>
<evidence type="ECO:0000312" key="8">
    <source>
        <dbReference type="RGD" id="735183"/>
    </source>
</evidence>
<name>MLP3A_RAT</name>
<keyword id="KW-0072">Autophagy</keyword>
<keyword id="KW-0963">Cytoplasm</keyword>
<keyword id="KW-0968">Cytoplasmic vesicle</keyword>
<keyword id="KW-0206">Cytoskeleton</keyword>
<keyword id="KW-0903">Direct protein sequencing</keyword>
<keyword id="KW-0449">Lipoprotein</keyword>
<keyword id="KW-0472">Membrane</keyword>
<keyword id="KW-0493">Microtubule</keyword>
<keyword id="KW-0597">Phosphoprotein</keyword>
<keyword id="KW-1185">Reference proteome</keyword>
<keyword id="KW-0833">Ubl conjugation pathway</keyword>
<feature type="chain" id="PRO_0000017196" description="Microtubule-associated protein 1 light chain 3 alpha">
    <location>
        <begin position="1"/>
        <end position="120"/>
    </location>
</feature>
<feature type="propeptide" id="PRO_0000017197" description="Removed in mature form" evidence="7">
    <location>
        <position position="121"/>
    </location>
</feature>
<feature type="region of interest" description="Important for interaction with ATG13 and for autophagosome formation" evidence="3">
    <location>
        <begin position="49"/>
        <end position="53"/>
    </location>
</feature>
<feature type="site" description="Cleavage; by ATG4B" evidence="3">
    <location>
        <begin position="120"/>
        <end position="121"/>
    </location>
</feature>
<feature type="modified residue" description="Phosphoserine; by PKA" evidence="3">
    <location>
        <position position="12"/>
    </location>
</feature>
<feature type="lipid moiety-binding region" description="Phosphatidylethanolamine amidated glycine; alternate" evidence="3">
    <location>
        <position position="120"/>
    </location>
</feature>
<feature type="lipid moiety-binding region" description="Phosphatidylserine amidated glycine; alternate" evidence="3">
    <location>
        <position position="120"/>
    </location>
</feature>
<proteinExistence type="evidence at protein level"/>
<sequence length="121" mass="14272">MPSDRPFKQRRSFADRCKEVQQIRDQHPSKIPVIIERYKGEKQLPVLDKTKFLVPDHVNMSELVKIIRRRLQLNPTQAFFLLVNQHSMVSVSTPIADIYEQEKDEDGFLYMVYASQETFGF</sequence>
<comment type="function">
    <text evidence="3">Ubiquitin-like modifier involved in formation of autophagosomal vacuoles (autophagosomes). While LC3s are involved in elongation of the phagophore membrane, the GABARAP/GATE-16 subfamily is essential for a later stage in autophagosome maturation. Through its interaction with the reticulophagy receptor TEX264, participates in the remodeling of subdomains of the endoplasmic reticulum into autophagosomes upon nutrient stress, which then fuse with lysosomes for endoplasmic reticulum turnover.</text>
</comment>
<comment type="subunit">
    <text evidence="1 3 5">3 different light chains, LC1 (a cleavage product of MAP1B), LC2 (a cleavage product of MAP1A) and LC3 (produced by one of the MAP1LC3 genes), can associate with the MAP1A or MAP1B heavy chains (By similarity). Interacts with TP53INP2 (By similarity). Interacts with TP53INP1 and SQSTM1 (PubMed:22421968). Directly interacts with SQSTM1; this interaction leads to MAP1LC3A recruitment to inclusion bodies containing polyubiquitinated protein aggregates and to inclusion body degradation by autophagy (By similarity). Interacts with ATG13 and ULK1 (By similarity). Interacts with TBC1D5 (By similarity). Found in a complex with UBQLN1 and UBQLN2 (By similarity). Interacts with UBQLN4 (via STI1 1 and 2 domains) (By similarity). Interacts with UBQLN1 in the presence of UBQLN4 (By similarity). Interacts with TRIM5 (By similarity). Interacts with MEFV. Interacts with reticulophagy regulators RETREG1, RETREG2 and RETREG3 (By similarity). Interacts with PICALM (By similarity). Interacts with the reticulophagy receptor TEX264 (By similarity). Interacts with MOAP1 (via LIR motif) (By similarity). Interacts with IRGM (By similarity). Interacts with ATG3 (By similarity). Interacts with SPART (By similarity).</text>
</comment>
<comment type="subcellular location">
    <subcellularLocation>
        <location evidence="3">Endomembrane system</location>
        <topology evidence="3">Lipid-anchor</topology>
    </subcellularLocation>
    <subcellularLocation>
        <location evidence="3">Cytoplasmic vesicle</location>
        <location evidence="3">Autophagosome membrane</location>
        <topology evidence="3">Lipid-anchor</topology>
    </subcellularLocation>
    <subcellularLocation>
        <location evidence="3">Cytoplasmic vesicle</location>
        <location evidence="3">Autophagosome</location>
    </subcellularLocation>
    <subcellularLocation>
        <location evidence="2">Cytoplasm</location>
        <location evidence="2">Cytoskeleton</location>
    </subcellularLocation>
    <text evidence="3">LC3-II binds to the autophagic membranes.</text>
</comment>
<comment type="developmental stage">
    <text evidence="6">Expressed in neurons at 18.5 dpc (at protein level).</text>
</comment>
<comment type="PTM">
    <text evidence="2 3 4">The precursor molecule is cleaved by ATG4 (ATG4A, ATG4B, ATG4C or ATG4D) to expose the glycine at the C-terminus and form the cytosolic form, LC3-I (PubMed:16874114). The processed form is then activated by APG7L/ATG7, transferred to ATG3 and conjugated to phosphatidylethanolamine (PE) phospholipid to form the membrane-bound form, LC3-II. During non-canonical autophagy, the processed form is conjugated to phosphatidylserine (PS) phospholipid. ATG4 proteins also mediate the delipidation of PE-conjugated forms. In addition, ATG4B and ATG4D mediate delipidation of ATG8 proteins conjugated to PS during non-canonical autophagy. ATG4B constitutes the major protein for proteolytic activation (By similarity). ATG4D is the main enzyme for delipidation activity (By similarity).</text>
</comment>
<comment type="PTM">
    <text evidence="3">Phosphorylation at Ser-12 by PKA inhibits conjugation to phosphatidylethanolamine (PE).</text>
</comment>
<comment type="similarity">
    <text evidence="7">Belongs to the ATG8 family.</text>
</comment>
<gene>
    <name evidence="8" type="primary">Map1lc3a</name>
</gene>